<gene>
    <name type="ordered locus">MG348</name>
</gene>
<organism>
    <name type="scientific">Mycoplasma genitalium (strain ATCC 33530 / DSM 19775 / NCTC 10195 / G37)</name>
    <name type="common">Mycoplasmoides genitalium</name>
    <dbReference type="NCBI Taxonomy" id="243273"/>
    <lineage>
        <taxon>Bacteria</taxon>
        <taxon>Bacillati</taxon>
        <taxon>Mycoplasmatota</taxon>
        <taxon>Mycoplasmoidales</taxon>
        <taxon>Mycoplasmoidaceae</taxon>
        <taxon>Mycoplasmoides</taxon>
    </lineage>
</organism>
<keyword id="KW-1003">Cell membrane</keyword>
<keyword id="KW-0449">Lipoprotein</keyword>
<keyword id="KW-0472">Membrane</keyword>
<keyword id="KW-0564">Palmitate</keyword>
<keyword id="KW-1185">Reference proteome</keyword>
<keyword id="KW-0732">Signal</keyword>
<proteinExistence type="inferred from homology"/>
<reference key="1">
    <citation type="journal article" date="1995" name="Science">
        <title>The minimal gene complement of Mycoplasma genitalium.</title>
        <authorList>
            <person name="Fraser C.M."/>
            <person name="Gocayne J.D."/>
            <person name="White O."/>
            <person name="Adams M.D."/>
            <person name="Clayton R.A."/>
            <person name="Fleischmann R.D."/>
            <person name="Bult C.J."/>
            <person name="Kerlavage A.R."/>
            <person name="Sutton G.G."/>
            <person name="Kelley J.M."/>
            <person name="Fritchman J.L."/>
            <person name="Weidman J.F."/>
            <person name="Small K.V."/>
            <person name="Sandusky M."/>
            <person name="Fuhrmann J.L."/>
            <person name="Nguyen D.T."/>
            <person name="Utterback T.R."/>
            <person name="Saudek D.M."/>
            <person name="Phillips C.A."/>
            <person name="Merrick J.M."/>
            <person name="Tomb J.-F."/>
            <person name="Dougherty B.A."/>
            <person name="Bott K.F."/>
            <person name="Hu P.-C."/>
            <person name="Lucier T.S."/>
            <person name="Peterson S.N."/>
            <person name="Smith H.O."/>
            <person name="Hutchison C.A. III"/>
            <person name="Venter J.C."/>
        </authorList>
    </citation>
    <scope>NUCLEOTIDE SEQUENCE [LARGE SCALE GENOMIC DNA]</scope>
    <source>
        <strain>ATCC 33530 / DSM 19775 / NCTC 10195 / G37</strain>
    </source>
</reference>
<feature type="signal peptide" evidence="1">
    <location>
        <begin position="1"/>
        <end position="27"/>
    </location>
</feature>
<feature type="chain" id="PRO_0000014038" description="Uncharacterized lipoprotein MG348">
    <location>
        <begin position="28"/>
        <end position="322"/>
    </location>
</feature>
<feature type="region of interest" description="Disordered" evidence="2">
    <location>
        <begin position="235"/>
        <end position="298"/>
    </location>
</feature>
<feature type="compositionally biased region" description="Polar residues" evidence="2">
    <location>
        <begin position="235"/>
        <end position="254"/>
    </location>
</feature>
<feature type="compositionally biased region" description="Gly residues" evidence="2">
    <location>
        <begin position="257"/>
        <end position="267"/>
    </location>
</feature>
<feature type="compositionally biased region" description="Polar residues" evidence="2">
    <location>
        <begin position="274"/>
        <end position="296"/>
    </location>
</feature>
<feature type="lipid moiety-binding region" description="N-palmitoyl cysteine" evidence="1">
    <location>
        <position position="28"/>
    </location>
</feature>
<feature type="lipid moiety-binding region" description="S-diacylglycerol cysteine" evidence="1">
    <location>
        <position position="28"/>
    </location>
</feature>
<comment type="subcellular location">
    <subcellularLocation>
        <location evidence="1">Cell membrane</location>
        <topology evidence="1">Lipid-anchor</topology>
    </subcellularLocation>
</comment>
<protein>
    <recommendedName>
        <fullName>Uncharacterized lipoprotein MG348</fullName>
    </recommendedName>
</protein>
<evidence type="ECO:0000255" key="1">
    <source>
        <dbReference type="PROSITE-ProRule" id="PRU00303"/>
    </source>
</evidence>
<evidence type="ECO:0000256" key="2">
    <source>
        <dbReference type="SAM" id="MobiDB-lite"/>
    </source>
</evidence>
<accession>P47590</accession>
<name>Y348_MYCGE</name>
<dbReference type="EMBL" id="L43967">
    <property type="protein sequence ID" value="AAC71573.1"/>
    <property type="molecule type" value="Genomic_DNA"/>
</dbReference>
<dbReference type="PIR" id="E64238">
    <property type="entry name" value="E64238"/>
</dbReference>
<dbReference type="RefSeq" id="WP_009885806.1">
    <property type="nucleotide sequence ID" value="NC_000908.2"/>
</dbReference>
<dbReference type="GeneID" id="88282526"/>
<dbReference type="KEGG" id="mge:MG_348"/>
<dbReference type="eggNOG" id="ENOG5031YVP">
    <property type="taxonomic scope" value="Bacteria"/>
</dbReference>
<dbReference type="HOGENOM" id="CLU_911612_0_0_14"/>
<dbReference type="InParanoid" id="P47590"/>
<dbReference type="OrthoDB" id="9764248at2"/>
<dbReference type="BioCyc" id="MGEN243273:G1GJ2-436-MONOMER"/>
<dbReference type="Proteomes" id="UP000000807">
    <property type="component" value="Chromosome"/>
</dbReference>
<dbReference type="GO" id="GO:0005886">
    <property type="term" value="C:plasma membrane"/>
    <property type="evidence" value="ECO:0007669"/>
    <property type="project" value="UniProtKB-SubCell"/>
</dbReference>
<dbReference type="InterPro" id="IPR049194">
    <property type="entry name" value="DUF6856"/>
</dbReference>
<dbReference type="Pfam" id="PF21637">
    <property type="entry name" value="DUF6856"/>
    <property type="match status" value="1"/>
</dbReference>
<dbReference type="PROSITE" id="PS51257">
    <property type="entry name" value="PROKAR_LIPOPROTEIN"/>
    <property type="match status" value="1"/>
</dbReference>
<sequence>MKRLFWNLKHKKAWLVLLLGTGMILSSCSNIDQSFFRELSVESVEKNTAYNQLPVNSTTFRNLVFGTRSYNDGNYVVVIATETDSSQINFLNGSTNQGTSSLSWGGTLGTTIRQVQNRYSTYPNGVKFLIWNDIAPGSVKWNPYARFPVVDRKNELASQEDKDNSNKLRRSDASAVRYREIVDFIQRTYGGNVANLINQSNVHAQTVGNDVTKAIVIAFRKDNLNKIRANFYGLDNSTNPNAPGSGQGDSTPPASSGEGGGSDGSSGGDSSSGNGQNTTPTSPQSSQPAVQRSQKSYGIKQHAVRVSVDFLNFLDSVYTPLN</sequence>